<evidence type="ECO:0000255" key="1">
    <source>
        <dbReference type="HAMAP-Rule" id="MF_04083"/>
    </source>
</evidence>
<evidence type="ECO:0007829" key="2">
    <source>
        <dbReference type="PDB" id="1TJH"/>
    </source>
</evidence>
<evidence type="ECO:0007829" key="3">
    <source>
        <dbReference type="PDB" id="4I2L"/>
    </source>
</evidence>
<protein>
    <recommendedName>
        <fullName evidence="1">Envelope glycoprotein gp160</fullName>
    </recommendedName>
    <alternativeName>
        <fullName evidence="1">Env polyprotein</fullName>
    </alternativeName>
    <component>
        <recommendedName>
            <fullName evidence="1">Surface protein gp120</fullName>
            <shortName evidence="1">SU</shortName>
        </recommendedName>
        <alternativeName>
            <fullName evidence="1">Glycoprotein 120</fullName>
            <shortName evidence="1">gp120</shortName>
        </alternativeName>
    </component>
    <component>
        <recommendedName>
            <fullName evidence="1">Transmembrane protein gp41</fullName>
            <shortName evidence="1">TM</shortName>
        </recommendedName>
        <alternativeName>
            <fullName evidence="1">Glycoprotein 41</fullName>
            <shortName evidence="1">gp41</shortName>
        </alternativeName>
    </component>
</protein>
<name>ENV_HV1Z6</name>
<organismHost>
    <name type="scientific">Homo sapiens</name>
    <name type="common">Human</name>
    <dbReference type="NCBI Taxonomy" id="9606"/>
</organismHost>
<accession>P04580</accession>
<reference key="1">
    <citation type="journal article" date="1987" name="Gene">
        <title>Molecular characterization of human immunodeficiency virus from Zaire: nucleotide sequence analysis identifies conserved and variable domains in the envelope gene.</title>
        <authorList>
            <person name="Srinivasan A."/>
            <person name="Anand R."/>
            <person name="York D."/>
            <person name="Ranganathan P."/>
            <person name="Feorino P."/>
            <person name="Schochetman G."/>
            <person name="Curran J."/>
            <person name="Kalyanaraman V.S."/>
            <person name="Luciw P.A."/>
            <person name="Sanchez-Pescador R."/>
        </authorList>
    </citation>
    <scope>NUCLEOTIDE SEQUENCE [GENOMIC RNA]</scope>
</reference>
<reference key="2">
    <citation type="journal article" date="2003" name="APMIS">
        <title>Pathogens target DC-SIGN to influence their fate DC-SIGN functions as a pathogen receptor with broad specificity.</title>
        <authorList>
            <person name="Geijtenbeek T.B."/>
            <person name="van Kooyk Y."/>
        </authorList>
    </citation>
    <scope>REVIEW</scope>
</reference>
<reference key="3">
    <citation type="journal article" date="2003" name="Biochim. Biophys. Acta">
        <title>The HIV Env-mediated fusion reaction.</title>
        <authorList>
            <person name="Gallo S.A."/>
            <person name="Finnegan C.M."/>
            <person name="Viard M."/>
            <person name="Raviv Y."/>
            <person name="Dimitrov A."/>
            <person name="Rawat S.S."/>
            <person name="Puri A."/>
            <person name="Durell S."/>
            <person name="Blumenthal R."/>
        </authorList>
    </citation>
    <scope>REVIEW</scope>
</reference>
<reference key="4">
    <citation type="journal article" date="2005" name="Cell Death Differ.">
        <title>Mechanisms of apoptosis induction by the HIV-1 envelope.</title>
        <authorList>
            <person name="Perfettini J.-L."/>
            <person name="Castedo M."/>
            <person name="Roumier T."/>
            <person name="Andreau K."/>
            <person name="Nardacci R."/>
            <person name="Piacentini M."/>
            <person name="Kroemer G."/>
        </authorList>
    </citation>
    <scope>REVIEW</scope>
</reference>
<reference key="5">
    <citation type="journal article" date="2005" name="AIDS Res. Hum. Retroviruses">
        <title>V3: HIV's switch-hitter.</title>
        <authorList>
            <person name="Hartley O."/>
            <person name="Klasse P.J."/>
            <person name="Sattentau Q.J."/>
            <person name="Moore J.P."/>
        </authorList>
    </citation>
    <scope>REVIEW</scope>
</reference>
<reference key="6">
    <citation type="journal article" date="2005" name="Drugs">
        <title>Emerging drug targets for antiretroviral therapy.</title>
        <authorList>
            <person name="Reeves J.D."/>
            <person name="Piefer A.J."/>
        </authorList>
    </citation>
    <scope>REVIEW</scope>
</reference>
<reference key="7">
    <citation type="journal article" date="2006" name="EMBO J.">
        <title>HIV and the chemokine system: 10 years later.</title>
        <authorList>
            <person name="Lusso P."/>
        </authorList>
    </citation>
    <scope>REVIEW</scope>
</reference>
<keyword id="KW-0002">3D-structure</keyword>
<keyword id="KW-0014">AIDS</keyword>
<keyword id="KW-0053">Apoptosis</keyword>
<keyword id="KW-1165">Clathrin-mediated endocytosis of virus by host</keyword>
<keyword id="KW-0165">Cleavage on pair of basic residues</keyword>
<keyword id="KW-0175">Coiled coil</keyword>
<keyword id="KW-1015">Disulfide bond</keyword>
<keyword id="KW-1170">Fusion of virus membrane with host endosomal membrane</keyword>
<keyword id="KW-1168">Fusion of virus membrane with host membrane</keyword>
<keyword id="KW-0325">Glycoprotein</keyword>
<keyword id="KW-1032">Host cell membrane</keyword>
<keyword id="KW-1039">Host endosome</keyword>
<keyword id="KW-1043">Host membrane</keyword>
<keyword id="KW-0945">Host-virus interaction</keyword>
<keyword id="KW-0449">Lipoprotein</keyword>
<keyword id="KW-0472">Membrane</keyword>
<keyword id="KW-0564">Palmitate</keyword>
<keyword id="KW-0732">Signal</keyword>
<keyword id="KW-0812">Transmembrane</keyword>
<keyword id="KW-1133">Transmembrane helix</keyword>
<keyword id="KW-1161">Viral attachment to host cell</keyword>
<keyword id="KW-0261">Viral envelope protein</keyword>
<keyword id="KW-0899">Viral immunoevasion</keyword>
<keyword id="KW-1162">Viral penetration into host cytoplasm</keyword>
<keyword id="KW-0946">Virion</keyword>
<keyword id="KW-1164">Virus endocytosis by host</keyword>
<keyword id="KW-1160">Virus entry into host cell</keyword>
<sequence length="855" mass="96971">MRAREIERNCPNLWKWGIMLLGILMICSAADNLWVTVYYGVPVWKEATTTLFCASDAKSYKTEAHNIWATHACVPTDPNPQEIELENVTENFNMWRNNMVEQIHEDIISLWDQSLKPCVKLTPLCVTLNCTDESDEWMGNVTGKNVTEDIRMKNCSFNITTVVRDKTKQVHALFYRLDIVPIDNDNSTNSTNYRLINCNTSAITQACPKVSFEPIPIHYCAPAGFAILKCRDKRFNGTGPCTNVSTVQCTHGIRPVVSTQLLLNGSLAEEEIIIRSENLTNNAKIIIVQLNESVAINCTRPYKNTRQSTPIGLGQALYTTRGRTKIIGQAHCNISKEDWNKTLQRVAIKLGNLLNKTTIIFKPSSGGDAEITTHSFNCGGEFFYCNTSGLFNSTWNINNSEGANSTESDNKLITLQCRIKQIINMWQGVGKAMYAPPIEGQINCSSNITGLLLTRDGGTNNSSNETFRPGGGDMRDNWRSELYKYKVVKIEPLGVAPTKAKRRVVEREKRAIGLGAMFLGFLGAAGSTMGAASVTLTVQARQLMSGIVQQQNNLLRAIEAQQHLLQLTVWGIKQLQARILAVERYLKDQQLLGIWGCSGKLICTTTVPWNSSWSNRSLNDIWQNMTWMEWEREIDNYTGLIYRLIEESQTQQEKNEQELLELDKWASLWNWFNITQWLWYIKIFIMIVGGLIGLRIVFAVLSLVNRVRQGYSPLSFQTLLPAPREPDRPEGIEEEGGERGRDRSIRLVNGFSALIWDDLRNLCLFSYHRLRDLILIAARIVELLGRRGWEALKYLWNLLQYWSRELRNSASSLLDTIAIAVAEGTDRVIEIVRRTYRAVLNVPTRIRQGLERLLL</sequence>
<organism>
    <name type="scientific">Human immunodeficiency virus type 1 group M subtype D (isolate Z6)</name>
    <name type="common">HIV-1</name>
    <dbReference type="NCBI Taxonomy" id="11708"/>
    <lineage>
        <taxon>Viruses</taxon>
        <taxon>Riboviria</taxon>
        <taxon>Pararnavirae</taxon>
        <taxon>Artverviricota</taxon>
        <taxon>Revtraviricetes</taxon>
        <taxon>Ortervirales</taxon>
        <taxon>Retroviridae</taxon>
        <taxon>Orthoretrovirinae</taxon>
        <taxon>Lentivirus</taxon>
        <taxon>Human immunodeficiency virus type 1</taxon>
    </lineage>
</organism>
<proteinExistence type="evidence at protein level"/>
<gene>
    <name evidence="1" type="primary">env</name>
</gene>
<feature type="signal peptide" evidence="1">
    <location>
        <begin position="1"/>
        <end position="31"/>
    </location>
</feature>
<feature type="chain" id="PRO_0000441247" description="Envelope glycoprotein gp160" evidence="1">
    <location>
        <begin position="32"/>
        <end position="855"/>
    </location>
</feature>
<feature type="chain" id="PRO_0000441248" description="Surface protein gp120" evidence="1">
    <location>
        <begin position="32"/>
        <end position="510"/>
    </location>
</feature>
<feature type="chain" id="PRO_0000038432" description="Transmembrane protein gp41" evidence="1">
    <location>
        <begin position="511"/>
        <end position="855"/>
    </location>
</feature>
<feature type="topological domain" description="Extracellular" evidence="1">
    <location>
        <begin position="32"/>
        <end position="683"/>
    </location>
</feature>
<feature type="transmembrane region" description="Helical" evidence="1">
    <location>
        <begin position="684"/>
        <end position="704"/>
    </location>
</feature>
<feature type="topological domain" description="Cytoplasmic" evidence="1">
    <location>
        <begin position="705"/>
        <end position="855"/>
    </location>
</feature>
<feature type="region of interest" description="V1" evidence="1">
    <location>
        <begin position="130"/>
        <end position="154"/>
    </location>
</feature>
<feature type="region of interest" description="V2" evidence="1">
    <location>
        <begin position="155"/>
        <end position="198"/>
    </location>
</feature>
<feature type="region of interest" description="V3" evidence="1">
    <location>
        <begin position="298"/>
        <end position="331"/>
    </location>
</feature>
<feature type="region of interest" description="CD4-binding loop" evidence="1">
    <location>
        <begin position="364"/>
        <end position="374"/>
    </location>
</feature>
<feature type="region of interest" description="V4" evidence="1">
    <location>
        <begin position="385"/>
        <end position="417"/>
    </location>
</feature>
<feature type="region of interest" description="V5">
    <location>
        <begin position="459"/>
        <end position="470"/>
    </location>
</feature>
<feature type="region of interest" description="V5" evidence="1">
    <location>
        <begin position="462"/>
        <end position="470"/>
    </location>
</feature>
<feature type="region of interest" description="Fusion peptide" evidence="1">
    <location>
        <begin position="511"/>
        <end position="531"/>
    </location>
</feature>
<feature type="region of interest" description="Immunosuppression" evidence="1">
    <location>
        <begin position="573"/>
        <end position="591"/>
    </location>
</feature>
<feature type="region of interest" description="MPER; binding to GalCer" evidence="1">
    <location>
        <begin position="661"/>
        <end position="682"/>
    </location>
</feature>
<feature type="coiled-coil region" evidence="1">
    <location>
        <begin position="632"/>
        <end position="666"/>
    </location>
</feature>
<feature type="short sequence motif" description="YXXL motif; contains endocytosis signal" evidence="1">
    <location>
        <begin position="711"/>
        <end position="714"/>
    </location>
</feature>
<feature type="short sequence motif" description="Di-leucine internalization motif" evidence="1">
    <location>
        <begin position="854"/>
        <end position="855"/>
    </location>
</feature>
<feature type="site" description="Cleavage; by host furin" evidence="1">
    <location>
        <begin position="510"/>
        <end position="511"/>
    </location>
</feature>
<feature type="lipid moiety-binding region" description="S-palmitoyl cysteine; by host" evidence="1">
    <location>
        <position position="763"/>
    </location>
</feature>
<feature type="glycosylation site" description="N-linked (GlcNAc...) asparagine; by host" evidence="1">
    <location>
        <position position="87"/>
    </location>
</feature>
<feature type="glycosylation site" description="N-linked (GlcNAc...) asparagine; by host" evidence="1">
    <location>
        <position position="129"/>
    </location>
</feature>
<feature type="glycosylation site" description="N-linked (GlcNAc...) asparagine; by host" evidence="1">
    <location>
        <position position="140"/>
    </location>
</feature>
<feature type="glycosylation site" description="N-linked (GlcNAc...) asparagine; by host" evidence="1">
    <location>
        <position position="145"/>
    </location>
</feature>
<feature type="glycosylation site" description="N-linked (GlcNAc...) asparagine; by host" evidence="1">
    <location>
        <position position="154"/>
    </location>
</feature>
<feature type="glycosylation site" description="N-linked (GlcNAc...) asparagine; by host" evidence="1">
    <location>
        <position position="158"/>
    </location>
</feature>
<feature type="glycosylation site" description="N-linked (GlcNAc...) asparagine; by host" evidence="1">
    <location>
        <position position="186"/>
    </location>
</feature>
<feature type="glycosylation site" description="N-linked (GlcNAc...) asparagine; by host" evidence="1">
    <location>
        <position position="189"/>
    </location>
</feature>
<feature type="glycosylation site" description="N-linked (GlcNAc...) asparagine; by host" evidence="1">
    <location>
        <position position="199"/>
    </location>
</feature>
<feature type="glycosylation site" description="N-linked (GlcNAc...) asparagine; by host" evidence="1">
    <location>
        <position position="236"/>
    </location>
</feature>
<feature type="glycosylation site" description="N-linked (GlcNAc...) asparagine; by host" evidence="1">
    <location>
        <position position="243"/>
    </location>
</feature>
<feature type="glycosylation site" description="N-linked (GlcNAc...) asparagine; by host" evidence="1">
    <location>
        <position position="264"/>
    </location>
</feature>
<feature type="glycosylation site" description="N-linked (GlcNAc...) asparagine; by host" evidence="1">
    <location>
        <position position="278"/>
    </location>
</feature>
<feature type="glycosylation site" description="N-linked (GlcNAc...) asparagine; by host" evidence="1">
    <location>
        <position position="291"/>
    </location>
</feature>
<feature type="glycosylation site" description="N-linked (GlcNAc...) asparagine; by host" evidence="1">
    <location>
        <position position="297"/>
    </location>
</feature>
<feature type="glycosylation site" description="N-linked (GlcNAc...) asparagine; by host" evidence="1">
    <location>
        <position position="333"/>
    </location>
</feature>
<feature type="glycosylation site" description="N-linked (GlcNAc...) asparagine; by host" evidence="1">
    <location>
        <position position="340"/>
    </location>
</feature>
<feature type="glycosylation site" description="N-linked (GlcNAc...) asparagine; by host" evidence="1">
    <location>
        <position position="355"/>
    </location>
</feature>
<feature type="glycosylation site" description="N-linked (GlcNAc...) asparagine; by host" evidence="1">
    <location>
        <position position="386"/>
    </location>
</feature>
<feature type="glycosylation site" description="N-linked (GlcNAc...) asparagine; by host" evidence="1">
    <location>
        <position position="392"/>
    </location>
</feature>
<feature type="glycosylation site" description="N-linked (GlcNAc...) asparagine; by host" evidence="1">
    <location>
        <position position="398"/>
    </location>
</feature>
<feature type="glycosylation site" description="N-linked (GlcNAc...) asparagine; by host" evidence="1">
    <location>
        <position position="404"/>
    </location>
</feature>
<feature type="glycosylation site" description="N-linked (GlcNAc...) asparagine; by host" evidence="1">
    <location>
        <position position="443"/>
    </location>
</feature>
<feature type="glycosylation site" description="N-linked (GlcNAc...) asparagine; by host" evidence="1">
    <location>
        <position position="447"/>
    </location>
</feature>
<feature type="glycosylation site" description="N-linked (GlcNAc...) asparagine; by host" evidence="1">
    <location>
        <position position="460"/>
    </location>
</feature>
<feature type="glycosylation site" description="N-linked (GlcNAc...) asparagine; by host" evidence="1">
    <location>
        <position position="461"/>
    </location>
</feature>
<feature type="glycosylation site" description="N-linked (GlcNAc...) asparagine; by host" evidence="1">
    <location>
        <position position="464"/>
    </location>
</feature>
<feature type="glycosylation site" description="N-linked (GlcNAc...) asparagine; by host" evidence="1">
    <location>
        <position position="610"/>
    </location>
</feature>
<feature type="glycosylation site" description="N-linked (GlcNAc...) asparagine; by host" evidence="1">
    <location>
        <position position="615"/>
    </location>
</feature>
<feature type="glycosylation site" description="N-linked (GlcNAc...) asparagine; by host" evidence="1">
    <location>
        <position position="624"/>
    </location>
</feature>
<feature type="glycosylation site" description="N-linked (GlcNAc...) asparagine; by host" evidence="1">
    <location>
        <position position="636"/>
    </location>
</feature>
<feature type="glycosylation site" description="N-linked (GlcNAc...) asparagine; by host" evidence="1">
    <location>
        <position position="673"/>
    </location>
</feature>
<feature type="disulfide bond" evidence="1">
    <location>
        <begin position="53"/>
        <end position="73"/>
    </location>
</feature>
<feature type="disulfide bond" evidence="1">
    <location>
        <begin position="118"/>
        <end position="207"/>
    </location>
</feature>
<feature type="disulfide bond" evidence="1">
    <location>
        <begin position="125"/>
        <end position="198"/>
    </location>
</feature>
<feature type="disulfide bond" evidence="1">
    <location>
        <begin position="130"/>
        <end position="155"/>
    </location>
</feature>
<feature type="disulfide bond" evidence="1">
    <location>
        <begin position="220"/>
        <end position="249"/>
    </location>
</feature>
<feature type="disulfide bond" evidence="1">
    <location>
        <begin position="230"/>
        <end position="241"/>
    </location>
</feature>
<feature type="disulfide bond" evidence="1">
    <location>
        <begin position="298"/>
        <end position="332"/>
    </location>
</feature>
<feature type="disulfide bond" evidence="1">
    <location>
        <begin position="378"/>
        <end position="444"/>
    </location>
</feature>
<feature type="disulfide bond" evidence="1">
    <location>
        <begin position="385"/>
        <end position="417"/>
    </location>
</feature>
<feature type="disulfide bond" evidence="1">
    <location>
        <begin position="597"/>
        <end position="603"/>
    </location>
</feature>
<feature type="helix" evidence="3">
    <location>
        <begin position="551"/>
        <end position="588"/>
    </location>
</feature>
<feature type="turn" evidence="2">
    <location>
        <begin position="664"/>
        <end position="667"/>
    </location>
</feature>
<comment type="function">
    <molecule>Envelope glycoprotein gp160</molecule>
    <text evidence="1">Oligomerizes in the host endoplasmic reticulum into predominantly trimers. In a second time, gp160 transits in the host Golgi, where glycosylation is completed. The precursor is then proteolytically cleaved in the trans-Golgi and thereby activated by cellular furin or furin-like proteases to produce gp120 and gp41.</text>
</comment>
<comment type="function">
    <molecule>Surface protein gp120</molecule>
    <text evidence="1">Attaches the virus to the host lymphoid cell by binding to the primary receptor CD4. This interaction induces a structural rearrangement creating a high affinity binding site for a chemokine coreceptor like CXCR4 and/or CCR5. Acts as a ligand for CD209/DC-SIGN and CLEC4M/DC-SIGNR, which are respectively found on dendritic cells (DCs), and on endothelial cells of liver sinusoids and lymph node sinuses. These interactions allow capture of viral particles at mucosal surfaces by these cells and subsequent transmission to permissive cells. HIV subverts the migration properties of dendritic cells to gain access to CD4+ T-cells in lymph nodes. Virus transmission to permissive T-cells occurs either in trans (without DCs infection, through viral capture and transmission), or in cis (following DCs productive infection, through the usual CD4-gp120 interaction), thereby inducing a robust infection. In trans infection, bound virions remain infectious over days and it is proposed that they are not degraded, but protected in non-lysosomal acidic organelles within the DCs close to the cell membrane thus contributing to the viral infectious potential during DCs' migration from the periphery to the lymphoid tissues. On arrival at lymphoid tissues, intact virions recycle back to DCs' cell surface allowing virus transmission to CD4+ T-cells.</text>
</comment>
<comment type="function">
    <molecule>Transmembrane protein gp41</molecule>
    <text evidence="1">Acts as a class I viral fusion protein. Under the current model, the protein has at least 3 conformational states: pre-fusion native state, pre-hairpin intermediate state, and post-fusion hairpin state. During fusion of viral and target intracellular membranes, the coiled coil regions (heptad repeats) assume a trimer-of-hairpins structure, positioning the fusion peptide in close proximity to the C-terminal region of the ectodomain. The formation of this structure appears to drive apposition and subsequent fusion of viral and target cell membranes. Complete fusion occurs in host cell endosomes and is dynamin-dependent, however some lipid transfer might occur at the plasma membrane. The virus undergoes clathrin-dependent internalization long before endosomal fusion, thus minimizing the surface exposure of conserved viral epitopes during fusion and reducing the efficacy of inhibitors targeting these epitopes. Membranes fusion leads to delivery of the nucleocapsid into the cytoplasm.</text>
</comment>
<comment type="subunit">
    <molecule>Surface protein gp120</molecule>
    <text evidence="1">The mature envelope protein (Env) consists of a homotrimer of non-covalently associated gp120-gp41 heterodimers. The resulting complex protrudes from the virus surface as a spike. There seems to be as few as 10 spikes on the average virion. Interacts with host CD4, CCR5 and CXCR4. Gp120 also interacts with the C-type lectins CD209/DC-SIGN and CLEC4M/DC-SIGNR (collectively referred to as DC-SIGN(R)). Gp120 and gp41 interact with GalCer. Gp120 interacts with host ITGA4/ITGB7 complex; on CD4+ T-cells, this interaction results in rapid activation of integrin ITGAL/LFA-1, which facilitates efficient cell-to-cell spreading of HIV-1. Gp120 interacts with cell-associated heparan sulfate; this interaction increases virus infectivity on permissive cells and may be involved in infection of CD4- cells.</text>
</comment>
<comment type="subunit">
    <molecule>Transmembrane protein gp41</molecule>
    <text evidence="1">The mature envelope protein (Env) consists of a homotrimer of non-covalently associated gp120-gp41 heterodimers. The resulting complex protrudes from the virus surface as a spike. There seems to be as few as 10 spikes on the average virion.</text>
</comment>
<comment type="subcellular location">
    <molecule>Surface protein gp120</molecule>
    <subcellularLocation>
        <location evidence="1">Virion membrane</location>
        <topology evidence="1">Peripheral membrane protein</topology>
    </subcellularLocation>
    <subcellularLocation>
        <location evidence="1">Host cell membrane</location>
        <topology evidence="1">Peripheral membrane protein</topology>
    </subcellularLocation>
    <subcellularLocation>
        <location evidence="1">Host endosome membrane</location>
        <topology evidence="1">Single-pass type I membrane protein</topology>
    </subcellularLocation>
    <text evidence="1">The surface protein is not anchored to the viral envelope, but associates with the extravirion surface through its binding to TM. It is probably concentrated at the site of budding and incorporated into the virions possibly by contacts between the cytoplasmic tail of Env and the N-terminus of Gag.</text>
</comment>
<comment type="subcellular location">
    <molecule>Transmembrane protein gp41</molecule>
    <subcellularLocation>
        <location evidence="1">Virion membrane</location>
        <topology evidence="1">Single-pass type I membrane protein</topology>
    </subcellularLocation>
    <subcellularLocation>
        <location evidence="1">Host cell membrane</location>
        <topology evidence="1">Single-pass type I membrane protein</topology>
    </subcellularLocation>
    <subcellularLocation>
        <location evidence="1">Host endosome membrane</location>
        <topology evidence="1">Single-pass type I membrane protein</topology>
    </subcellularLocation>
    <text evidence="1">It is probably concentrated at the site of budding and incorporated into the virions possibly by contacts between the cytoplasmic tail of Env and the N-terminus of Gag.</text>
</comment>
<comment type="domain">
    <text evidence="1">Some of the most genetically diverse regions of the viral genome are present in Env. They are called variable regions 1 through 5 (V1 through V5). Coreceptor usage of gp120 is determined mainly by the primary structure of the third variable region (V3) in the outer domain of gp120. The sequence of V3 determines which coreceptor, CCR5 and/or CXCR4 (corresponding to R5/macrophage, X4/T cell and R5X4/T cell and macrophage tropism), is used to trigger the fusion potential of the Env complex, and hence which cells the virus can infect. Binding to CCR5 involves a region adjacent in addition to V3.</text>
</comment>
<comment type="domain">
    <text evidence="1">The membrane proximal external region (MPER) present in gp41 is a tryptophan-rich region recognized by the antibodies 2F5, Z13, and 4E10. MPER seems to play a role in fusion.</text>
</comment>
<comment type="domain">
    <text evidence="1">The 17 amino acids long immunosuppressive region is present in many retroviral envelope proteins. Synthetic peptides derived from this relatively conserved sequence inhibit immune function in vitro and in vivo.</text>
</comment>
<comment type="domain">
    <text evidence="1">The YXXL motif is involved in determining the exact site of viral release at the surface of infected mononuclear cells and promotes endocytosis. YXXL and di-leucine endocytosis motifs interact directly or indirectly with the clathrin adapter complexes, opperate independently, and their activities are not additive.</text>
</comment>
<comment type="domain">
    <text evidence="1">The CD4-binding region is targeted by the antibody b12.</text>
</comment>
<comment type="PTM">
    <text evidence="1">Highly glycosylated by host. The high number of glycan on the protein is reffered to as 'glycan shield' because it contributes to hide protein sequence from adaptive immune system.</text>
</comment>
<comment type="PTM">
    <text evidence="1">Palmitoylation of the transmembrane protein and of Env polyprotein (prior to its proteolytic cleavage) is essential for their association with host cell membrane lipid rafts. Palmitoylation is therefore required for envelope trafficking to classical lipid rafts, but not for viral replication.</text>
</comment>
<comment type="PTM">
    <text evidence="1">Specific enzymatic cleavages in vivo yield mature proteins. Envelope glycoproteins are synthesized as an inactive precursor that is heavily N-glycosylated and processed likely by host cell furin in the Golgi to yield the mature SU and TM proteins. The cleavage site between SU and TM requires the minimal sequence [KR]-X-[KR]-R. About 2 of the 9 disulfide bonds of gp41 are reduced by P4HB/PDI, following binding to CD4 receptor.</text>
</comment>
<comment type="miscellaneous">
    <text evidence="1">Inhibitors targeting HIV-1 viral envelope proteins are used as antiretroviral drugs. Attachment of virions to the cell surface via non-specific interactions and CD4 binding can be blocked by inhibitors that include cyanovirin-N, cyclotriazadisulfonamide analogs, PRO 2000, TNX 355 and PRO 542. In addition, BMS 806 can block CD4-induced conformational changes. Env interactions with the coreceptor molecules can be targeted by CCR5 antagonists including SCH-D, maraviroc (UK 427857) and aplaviroc (GW 873140), and the CXCR4 antagonist AMD 070. Fusion of viral and cellular membranes can be inhibited by peptides such as enfuvirtide and tifuvirtide (T 1249). Resistance to inhibitors associated with mutations in Env are observed. Most of the time, single mutations confer only a modest reduction in drug susceptibility. Combination of several mutations is usually required to develop a high-level drug resistance.</text>
</comment>
<comment type="miscellaneous">
    <text evidence="1">HIV-1 lineages are divided in three main groups, M (for Major), O (for Outlier), and N (for New, or Non-M, Non-O). The vast majority of strains found worldwide belong to the group M. Group O seems to be endemic to and largely confined to Cameroon and neighboring countries in West Central Africa, where these viruses represent a small minority of HIV-1 strains. The group N is represented by a limited number of isolates from Cameroonian persons. The group M is further subdivided in 9 clades or subtypes (A to D, F to H, J and K).</text>
</comment>
<comment type="similarity">
    <text evidence="1">Belongs to the HIV-1 env protein family.</text>
</comment>
<comment type="online information" name="hivdb">
    <link uri="https://hivdb.stanford.edu"/>
    <text>HIV drug resistance database</text>
</comment>
<comment type="online information" name="HIV drug resistance mutations">
    <link uri="https://www.iasusa.org/hiv-drug-resistance/hiv-drug-resistance-mutations/"/>
</comment>
<dbReference type="EMBL" id="K03458">
    <property type="protein sequence ID" value="AAA45380.1"/>
    <property type="molecule type" value="Genomic_RNA"/>
</dbReference>
<dbReference type="PIR" id="D26192">
    <property type="entry name" value="VCLJZR"/>
</dbReference>
<dbReference type="PDB" id="1TJH">
    <property type="method" value="X-ray"/>
    <property type="resolution" value="2.10 A"/>
    <property type="chains" value="P=659-669"/>
</dbReference>
<dbReference type="PDB" id="1TJI">
    <property type="method" value="X-ray"/>
    <property type="resolution" value="2.20 A"/>
    <property type="chains" value="P=653-669"/>
</dbReference>
<dbReference type="PDB" id="3F4Y">
    <property type="method" value="X-ray"/>
    <property type="resolution" value="2.00 A"/>
    <property type="chains" value="A/B/C=545-580"/>
</dbReference>
<dbReference type="PDB" id="3F50">
    <property type="method" value="X-ray"/>
    <property type="resolution" value="2.80 A"/>
    <property type="chains" value="A=545-580"/>
</dbReference>
<dbReference type="PDB" id="3G7A">
    <property type="method" value="X-ray"/>
    <property type="resolution" value="2.80 A"/>
    <property type="chains" value="A=545-580"/>
</dbReference>
<dbReference type="PDB" id="3MOA">
    <property type="method" value="X-ray"/>
    <property type="resolution" value="2.30 A"/>
    <property type="chains" value="P=653-669"/>
</dbReference>
<dbReference type="PDB" id="3MOB">
    <property type="method" value="X-ray"/>
    <property type="resolution" value="2.60 A"/>
    <property type="chains" value="P=659-669"/>
</dbReference>
<dbReference type="PDB" id="3MOD">
    <property type="method" value="X-ray"/>
    <property type="resolution" value="2.20 A"/>
    <property type="chains" value="P=659-669"/>
</dbReference>
<dbReference type="PDB" id="4I2L">
    <property type="method" value="X-ray"/>
    <property type="resolution" value="1.43 A"/>
    <property type="chains" value="C=549-589"/>
</dbReference>
<dbReference type="PDBsum" id="1TJH"/>
<dbReference type="PDBsum" id="1TJI"/>
<dbReference type="PDBsum" id="3F4Y"/>
<dbReference type="PDBsum" id="3F50"/>
<dbReference type="PDBsum" id="3G7A"/>
<dbReference type="PDBsum" id="3MOA"/>
<dbReference type="PDBsum" id="3MOB"/>
<dbReference type="PDBsum" id="3MOD"/>
<dbReference type="PDBsum" id="4I2L"/>
<dbReference type="SMR" id="P04580"/>
<dbReference type="MINT" id="P04580"/>
<dbReference type="GlyCosmos" id="P04580">
    <property type="glycosylation" value="32 sites, No reported glycans"/>
</dbReference>
<dbReference type="ABCD" id="P04580">
    <property type="antibodies" value="1 sequenced antibody"/>
</dbReference>
<dbReference type="Reactome" id="R-HSA-5621480">
    <property type="pathway name" value="Dectin-2 family"/>
</dbReference>
<dbReference type="EvolutionaryTrace" id="P04580"/>
<dbReference type="GO" id="GO:0044175">
    <property type="term" value="C:host cell endosome membrane"/>
    <property type="evidence" value="ECO:0007669"/>
    <property type="project" value="UniProtKB-SubCell"/>
</dbReference>
<dbReference type="GO" id="GO:0020002">
    <property type="term" value="C:host cell plasma membrane"/>
    <property type="evidence" value="ECO:0007669"/>
    <property type="project" value="UniProtKB-SubCell"/>
</dbReference>
<dbReference type="GO" id="GO:0016020">
    <property type="term" value="C:membrane"/>
    <property type="evidence" value="ECO:0007669"/>
    <property type="project" value="UniProtKB-UniRule"/>
</dbReference>
<dbReference type="GO" id="GO:0019031">
    <property type="term" value="C:viral envelope"/>
    <property type="evidence" value="ECO:0007669"/>
    <property type="project" value="UniProtKB-KW"/>
</dbReference>
<dbReference type="GO" id="GO:0055036">
    <property type="term" value="C:virion membrane"/>
    <property type="evidence" value="ECO:0007669"/>
    <property type="project" value="UniProtKB-SubCell"/>
</dbReference>
<dbReference type="GO" id="GO:0005198">
    <property type="term" value="F:structural molecule activity"/>
    <property type="evidence" value="ECO:0007669"/>
    <property type="project" value="UniProtKB-UniRule"/>
</dbReference>
<dbReference type="GO" id="GO:0075512">
    <property type="term" value="P:clathrin-dependent endocytosis of virus by host cell"/>
    <property type="evidence" value="ECO:0007669"/>
    <property type="project" value="UniProtKB-UniRule"/>
</dbReference>
<dbReference type="GO" id="GO:0039654">
    <property type="term" value="P:fusion of virus membrane with host endosome membrane"/>
    <property type="evidence" value="ECO:0007669"/>
    <property type="project" value="UniProtKB-UniRule"/>
</dbReference>
<dbReference type="GO" id="GO:0019064">
    <property type="term" value="P:fusion of virus membrane with host plasma membrane"/>
    <property type="evidence" value="ECO:0007669"/>
    <property type="project" value="UniProtKB-UniRule"/>
</dbReference>
<dbReference type="GO" id="GO:1903908">
    <property type="term" value="P:positive regulation of plasma membrane raft polarization"/>
    <property type="evidence" value="ECO:0007669"/>
    <property type="project" value="UniProtKB-UniRule"/>
</dbReference>
<dbReference type="GO" id="GO:1903911">
    <property type="term" value="P:positive regulation of receptor clustering"/>
    <property type="evidence" value="ECO:0007669"/>
    <property type="project" value="UniProtKB-UniRule"/>
</dbReference>
<dbReference type="GO" id="GO:0019082">
    <property type="term" value="P:viral protein processing"/>
    <property type="evidence" value="ECO:0007669"/>
    <property type="project" value="UniProtKB-UniRule"/>
</dbReference>
<dbReference type="GO" id="GO:0019062">
    <property type="term" value="P:virion attachment to host cell"/>
    <property type="evidence" value="ECO:0007669"/>
    <property type="project" value="UniProtKB-UniRule"/>
</dbReference>
<dbReference type="CDD" id="cd09909">
    <property type="entry name" value="HIV-1-like_HR1-HR2"/>
    <property type="match status" value="1"/>
</dbReference>
<dbReference type="FunFam" id="1.10.287.210:FF:000001">
    <property type="entry name" value="Envelope glycoprotein gp160"/>
    <property type="match status" value="1"/>
</dbReference>
<dbReference type="FunFam" id="1.20.5.490:FF:000001">
    <property type="entry name" value="Envelope glycoprotein gp160"/>
    <property type="match status" value="1"/>
</dbReference>
<dbReference type="FunFam" id="2.170.40.20:FF:000002">
    <property type="entry name" value="Envelope glycoprotein gp160"/>
    <property type="match status" value="1"/>
</dbReference>
<dbReference type="FunFam" id="2.170.40.20:FF:000003">
    <property type="entry name" value="Envelope glycoprotein gp160"/>
    <property type="match status" value="1"/>
</dbReference>
<dbReference type="Gene3D" id="1.10.287.210">
    <property type="match status" value="1"/>
</dbReference>
<dbReference type="Gene3D" id="2.170.40.20">
    <property type="entry name" value="Human immunodeficiency virus 1, Gp160, envelope glycoprotein"/>
    <property type="match status" value="2"/>
</dbReference>
<dbReference type="Gene3D" id="1.20.5.490">
    <property type="entry name" value="Single helix bin"/>
    <property type="match status" value="1"/>
</dbReference>
<dbReference type="HAMAP" id="MF_04083">
    <property type="entry name" value="HIV_ENV"/>
    <property type="match status" value="1"/>
</dbReference>
<dbReference type="InterPro" id="IPR036377">
    <property type="entry name" value="Gp120_core_sf"/>
</dbReference>
<dbReference type="InterPro" id="IPR037527">
    <property type="entry name" value="Gp160"/>
</dbReference>
<dbReference type="InterPro" id="IPR000328">
    <property type="entry name" value="GP41-like"/>
</dbReference>
<dbReference type="InterPro" id="IPR000777">
    <property type="entry name" value="HIV1_Gp120"/>
</dbReference>
<dbReference type="Pfam" id="PF00516">
    <property type="entry name" value="GP120"/>
    <property type="match status" value="2"/>
</dbReference>
<dbReference type="Pfam" id="PF00517">
    <property type="entry name" value="GP41"/>
    <property type="match status" value="1"/>
</dbReference>
<dbReference type="SUPFAM" id="SSF56502">
    <property type="entry name" value="gp120 core"/>
    <property type="match status" value="2"/>
</dbReference>
<dbReference type="SUPFAM" id="SSF58069">
    <property type="entry name" value="Virus ectodomain"/>
    <property type="match status" value="1"/>
</dbReference>